<sequence length="203" mass="22644">MIAAADVKALRERTGAGMMDCKKALTEANGDMEKAIEYLRKKGLATAAKRAGKVASEGLVHAYIHGGGRIGVLIEVNCETDFVAKTEDFRDLVHNLAMQVAASRPEYVAREDVPEEVLAKEKEILRAQALNEGKPEKVVEKIIAGRLEKFYQENCLLEQPFIKDMDRTVQDLINEKIAKLGEKIVVRRFVRYEVGEGIVQSEE</sequence>
<reference key="1">
    <citation type="journal article" date="2008" name="Environ. Microbiol.">
        <title>The complete genome sequence of Moorella thermoacetica (f. Clostridium thermoaceticum).</title>
        <authorList>
            <person name="Pierce E."/>
            <person name="Xie G."/>
            <person name="Barabote R.D."/>
            <person name="Saunders E."/>
            <person name="Han C.S."/>
            <person name="Detter J.C."/>
            <person name="Richardson P."/>
            <person name="Brettin T.S."/>
            <person name="Das A."/>
            <person name="Ljungdahl L.G."/>
            <person name="Ragsdale S.W."/>
        </authorList>
    </citation>
    <scope>NUCLEOTIDE SEQUENCE [LARGE SCALE GENOMIC DNA]</scope>
    <source>
        <strain>ATCC 39073 / JCM 9320</strain>
    </source>
</reference>
<protein>
    <recommendedName>
        <fullName evidence="1">Elongation factor Ts</fullName>
        <shortName evidence="1">EF-Ts</shortName>
    </recommendedName>
</protein>
<keyword id="KW-0963">Cytoplasm</keyword>
<keyword id="KW-0251">Elongation factor</keyword>
<keyword id="KW-0648">Protein biosynthesis</keyword>
<proteinExistence type="inferred from homology"/>
<name>EFTS_MOOTA</name>
<gene>
    <name evidence="1" type="primary">tsf</name>
    <name type="ordered locus">Moth_1033</name>
</gene>
<dbReference type="EMBL" id="CP000232">
    <property type="protein sequence ID" value="ABC19347.1"/>
    <property type="molecule type" value="Genomic_DNA"/>
</dbReference>
<dbReference type="RefSeq" id="YP_429890.1">
    <property type="nucleotide sequence ID" value="NC_007644.1"/>
</dbReference>
<dbReference type="SMR" id="Q2RJP2"/>
<dbReference type="STRING" id="264732.Moth_1033"/>
<dbReference type="EnsemblBacteria" id="ABC19347">
    <property type="protein sequence ID" value="ABC19347"/>
    <property type="gene ID" value="Moth_1033"/>
</dbReference>
<dbReference type="KEGG" id="mta:Moth_1033"/>
<dbReference type="PATRIC" id="fig|264732.11.peg.1113"/>
<dbReference type="eggNOG" id="COG0264">
    <property type="taxonomic scope" value="Bacteria"/>
</dbReference>
<dbReference type="HOGENOM" id="CLU_047155_1_1_9"/>
<dbReference type="OrthoDB" id="9808348at2"/>
<dbReference type="GO" id="GO:0005737">
    <property type="term" value="C:cytoplasm"/>
    <property type="evidence" value="ECO:0007669"/>
    <property type="project" value="UniProtKB-SubCell"/>
</dbReference>
<dbReference type="GO" id="GO:0003746">
    <property type="term" value="F:translation elongation factor activity"/>
    <property type="evidence" value="ECO:0007669"/>
    <property type="project" value="UniProtKB-UniRule"/>
</dbReference>
<dbReference type="CDD" id="cd14275">
    <property type="entry name" value="UBA_EF-Ts"/>
    <property type="match status" value="1"/>
</dbReference>
<dbReference type="FunFam" id="1.10.286.20:FF:000001">
    <property type="entry name" value="Elongation factor Ts"/>
    <property type="match status" value="1"/>
</dbReference>
<dbReference type="FunFam" id="1.10.8.10:FF:000001">
    <property type="entry name" value="Elongation factor Ts"/>
    <property type="match status" value="1"/>
</dbReference>
<dbReference type="Gene3D" id="1.10.286.20">
    <property type="match status" value="1"/>
</dbReference>
<dbReference type="Gene3D" id="1.10.8.10">
    <property type="entry name" value="DNA helicase RuvA subunit, C-terminal domain"/>
    <property type="match status" value="1"/>
</dbReference>
<dbReference type="Gene3D" id="3.30.479.20">
    <property type="entry name" value="Elongation factor Ts, dimerisation domain"/>
    <property type="match status" value="1"/>
</dbReference>
<dbReference type="HAMAP" id="MF_00050">
    <property type="entry name" value="EF_Ts"/>
    <property type="match status" value="1"/>
</dbReference>
<dbReference type="InterPro" id="IPR036402">
    <property type="entry name" value="EF-Ts_dimer_sf"/>
</dbReference>
<dbReference type="InterPro" id="IPR001816">
    <property type="entry name" value="Transl_elong_EFTs/EF1B"/>
</dbReference>
<dbReference type="InterPro" id="IPR014039">
    <property type="entry name" value="Transl_elong_EFTs/EF1B_dimer"/>
</dbReference>
<dbReference type="InterPro" id="IPR018101">
    <property type="entry name" value="Transl_elong_Ts_CS"/>
</dbReference>
<dbReference type="InterPro" id="IPR009060">
    <property type="entry name" value="UBA-like_sf"/>
</dbReference>
<dbReference type="NCBIfam" id="TIGR00116">
    <property type="entry name" value="tsf"/>
    <property type="match status" value="2"/>
</dbReference>
<dbReference type="PANTHER" id="PTHR11741">
    <property type="entry name" value="ELONGATION FACTOR TS"/>
    <property type="match status" value="1"/>
</dbReference>
<dbReference type="PANTHER" id="PTHR11741:SF0">
    <property type="entry name" value="ELONGATION FACTOR TS, MITOCHONDRIAL"/>
    <property type="match status" value="1"/>
</dbReference>
<dbReference type="Pfam" id="PF00889">
    <property type="entry name" value="EF_TS"/>
    <property type="match status" value="1"/>
</dbReference>
<dbReference type="SUPFAM" id="SSF54713">
    <property type="entry name" value="Elongation factor Ts (EF-Ts), dimerisation domain"/>
    <property type="match status" value="1"/>
</dbReference>
<dbReference type="SUPFAM" id="SSF46934">
    <property type="entry name" value="UBA-like"/>
    <property type="match status" value="1"/>
</dbReference>
<dbReference type="PROSITE" id="PS01126">
    <property type="entry name" value="EF_TS_1"/>
    <property type="match status" value="1"/>
</dbReference>
<dbReference type="PROSITE" id="PS01127">
    <property type="entry name" value="EF_TS_2"/>
    <property type="match status" value="1"/>
</dbReference>
<evidence type="ECO:0000255" key="1">
    <source>
        <dbReference type="HAMAP-Rule" id="MF_00050"/>
    </source>
</evidence>
<feature type="chain" id="PRO_0000241492" description="Elongation factor Ts">
    <location>
        <begin position="1"/>
        <end position="203"/>
    </location>
</feature>
<feature type="region of interest" description="Involved in Mg(2+) ion dislocation from EF-Tu" evidence="1">
    <location>
        <begin position="80"/>
        <end position="83"/>
    </location>
</feature>
<organism>
    <name type="scientific">Moorella thermoacetica (strain ATCC 39073 / JCM 9320)</name>
    <dbReference type="NCBI Taxonomy" id="264732"/>
    <lineage>
        <taxon>Bacteria</taxon>
        <taxon>Bacillati</taxon>
        <taxon>Bacillota</taxon>
        <taxon>Clostridia</taxon>
        <taxon>Moorellales</taxon>
        <taxon>Moorellaceae</taxon>
        <taxon>Moorella</taxon>
    </lineage>
</organism>
<comment type="function">
    <text evidence="1">Associates with the EF-Tu.GDP complex and induces the exchange of GDP to GTP. It remains bound to the aminoacyl-tRNA.EF-Tu.GTP complex up to the GTP hydrolysis stage on the ribosome.</text>
</comment>
<comment type="subcellular location">
    <subcellularLocation>
        <location evidence="1">Cytoplasm</location>
    </subcellularLocation>
</comment>
<comment type="similarity">
    <text evidence="1">Belongs to the EF-Ts family.</text>
</comment>
<accession>Q2RJP2</accession>